<organism>
    <name type="scientific">Drosophila melanogaster</name>
    <name type="common">Fruit fly</name>
    <dbReference type="NCBI Taxonomy" id="7227"/>
    <lineage>
        <taxon>Eukaryota</taxon>
        <taxon>Metazoa</taxon>
        <taxon>Ecdysozoa</taxon>
        <taxon>Arthropoda</taxon>
        <taxon>Hexapoda</taxon>
        <taxon>Insecta</taxon>
        <taxon>Pterygota</taxon>
        <taxon>Neoptera</taxon>
        <taxon>Endopterygota</taxon>
        <taxon>Diptera</taxon>
        <taxon>Brachycera</taxon>
        <taxon>Muscomorpha</taxon>
        <taxon>Ephydroidea</taxon>
        <taxon>Drosophilidae</taxon>
        <taxon>Drosophila</taxon>
        <taxon>Sophophora</taxon>
    </lineage>
</organism>
<name>GR64B_DROME</name>
<evidence type="ECO:0000250" key="1"/>
<evidence type="ECO:0000255" key="2"/>
<evidence type="ECO:0000269" key="3">
    <source>
    </source>
</evidence>
<evidence type="ECO:0000269" key="4">
    <source>
    </source>
</evidence>
<evidence type="ECO:0000305" key="5"/>
<keyword id="KW-1003">Cell membrane</keyword>
<keyword id="KW-0325">Glycoprotein</keyword>
<keyword id="KW-0472">Membrane</keyword>
<keyword id="KW-0675">Receptor</keyword>
<keyword id="KW-1185">Reference proteome</keyword>
<keyword id="KW-0807">Transducer</keyword>
<keyword id="KW-0812">Transmembrane</keyword>
<keyword id="KW-1133">Transmembrane helix</keyword>
<sequence>MPQGETFHRAVSNVLFISQIYGLLPVSNVRALDVADIRFRWCSPRILYSLLIGILNLSEFGAVINYVIKVTINFHTSSTLSLYIVCLLEHLFFWRLAIQWPRIMRTWHGVEQLFLRVPYRFYGEYRIKRRIYIVFTIVMSSALVEHCLLLGNSFHLSNMERTQCKINVTYFESIYKWERPHLYMILPYHFWMLPILEWVNQTIAYPRSFTDCFIMCIGIGLAARFHQLYRRIAAVHRKVMPAVFWTEVREHYLALKRLVHLLDAAIAPLVLLAFGNNMSFICFQLFNSFKNIGVDFLVMLAFWYSLGFAVVRTLLTIFVASSINDYERKIVTALRDVPSRAWSIEVQRFSEQLGNDTTALSGSGFFYLTRSLVLAMGTTIITYELMISDVINQGSIRQKTQYCREY</sequence>
<comment type="function">
    <text evidence="3 4">One of the few identified sugar gustatory receptors identified so far and which promotes the starvation-induced increase of feeding motivation.</text>
</comment>
<comment type="subcellular location">
    <subcellularLocation>
        <location evidence="1">Cell membrane</location>
        <topology evidence="1">Multi-pass membrane protein</topology>
    </subcellularLocation>
</comment>
<comment type="tissue specificity">
    <text evidence="3">Expressed in Gr5a-expressing sugar-sensing cells.</text>
</comment>
<comment type="similarity">
    <text evidence="5">Belongs to the insect chemoreceptor superfamily. Gustatory receptor (GR) family. Gr5a subfamily.</text>
</comment>
<gene>
    <name type="primary">Gr64b</name>
    <name type="ORF">CG32257</name>
</gene>
<accession>P83294</accession>
<accession>Q9VZJ7</accession>
<proteinExistence type="evidence at transcript level"/>
<reference key="1">
    <citation type="journal article" date="2000" name="Science">
        <title>The genome sequence of Drosophila melanogaster.</title>
        <authorList>
            <person name="Adams M.D."/>
            <person name="Celniker S.E."/>
            <person name="Holt R.A."/>
            <person name="Evans C.A."/>
            <person name="Gocayne J.D."/>
            <person name="Amanatides P.G."/>
            <person name="Scherer S.E."/>
            <person name="Li P.W."/>
            <person name="Hoskins R.A."/>
            <person name="Galle R.F."/>
            <person name="George R.A."/>
            <person name="Lewis S.E."/>
            <person name="Richards S."/>
            <person name="Ashburner M."/>
            <person name="Henderson S.N."/>
            <person name="Sutton G.G."/>
            <person name="Wortman J.R."/>
            <person name="Yandell M.D."/>
            <person name="Zhang Q."/>
            <person name="Chen L.X."/>
            <person name="Brandon R.C."/>
            <person name="Rogers Y.-H.C."/>
            <person name="Blazej R.G."/>
            <person name="Champe M."/>
            <person name="Pfeiffer B.D."/>
            <person name="Wan K.H."/>
            <person name="Doyle C."/>
            <person name="Baxter E.G."/>
            <person name="Helt G."/>
            <person name="Nelson C.R."/>
            <person name="Miklos G.L.G."/>
            <person name="Abril J.F."/>
            <person name="Agbayani A."/>
            <person name="An H.-J."/>
            <person name="Andrews-Pfannkoch C."/>
            <person name="Baldwin D."/>
            <person name="Ballew R.M."/>
            <person name="Basu A."/>
            <person name="Baxendale J."/>
            <person name="Bayraktaroglu L."/>
            <person name="Beasley E.M."/>
            <person name="Beeson K.Y."/>
            <person name="Benos P.V."/>
            <person name="Berman B.P."/>
            <person name="Bhandari D."/>
            <person name="Bolshakov S."/>
            <person name="Borkova D."/>
            <person name="Botchan M.R."/>
            <person name="Bouck J."/>
            <person name="Brokstein P."/>
            <person name="Brottier P."/>
            <person name="Burtis K.C."/>
            <person name="Busam D.A."/>
            <person name="Butler H."/>
            <person name="Cadieu E."/>
            <person name="Center A."/>
            <person name="Chandra I."/>
            <person name="Cherry J.M."/>
            <person name="Cawley S."/>
            <person name="Dahlke C."/>
            <person name="Davenport L.B."/>
            <person name="Davies P."/>
            <person name="de Pablos B."/>
            <person name="Delcher A."/>
            <person name="Deng Z."/>
            <person name="Mays A.D."/>
            <person name="Dew I."/>
            <person name="Dietz S.M."/>
            <person name="Dodson K."/>
            <person name="Doup L.E."/>
            <person name="Downes M."/>
            <person name="Dugan-Rocha S."/>
            <person name="Dunkov B.C."/>
            <person name="Dunn P."/>
            <person name="Durbin K.J."/>
            <person name="Evangelista C.C."/>
            <person name="Ferraz C."/>
            <person name="Ferriera S."/>
            <person name="Fleischmann W."/>
            <person name="Fosler C."/>
            <person name="Gabrielian A.E."/>
            <person name="Garg N.S."/>
            <person name="Gelbart W.M."/>
            <person name="Glasser K."/>
            <person name="Glodek A."/>
            <person name="Gong F."/>
            <person name="Gorrell J.H."/>
            <person name="Gu Z."/>
            <person name="Guan P."/>
            <person name="Harris M."/>
            <person name="Harris N.L."/>
            <person name="Harvey D.A."/>
            <person name="Heiman T.J."/>
            <person name="Hernandez J.R."/>
            <person name="Houck J."/>
            <person name="Hostin D."/>
            <person name="Houston K.A."/>
            <person name="Howland T.J."/>
            <person name="Wei M.-H."/>
            <person name="Ibegwam C."/>
            <person name="Jalali M."/>
            <person name="Kalush F."/>
            <person name="Karpen G.H."/>
            <person name="Ke Z."/>
            <person name="Kennison J.A."/>
            <person name="Ketchum K.A."/>
            <person name="Kimmel B.E."/>
            <person name="Kodira C.D."/>
            <person name="Kraft C.L."/>
            <person name="Kravitz S."/>
            <person name="Kulp D."/>
            <person name="Lai Z."/>
            <person name="Lasko P."/>
            <person name="Lei Y."/>
            <person name="Levitsky A.A."/>
            <person name="Li J.H."/>
            <person name="Li Z."/>
            <person name="Liang Y."/>
            <person name="Lin X."/>
            <person name="Liu X."/>
            <person name="Mattei B."/>
            <person name="McIntosh T.C."/>
            <person name="McLeod M.P."/>
            <person name="McPherson D."/>
            <person name="Merkulov G."/>
            <person name="Milshina N.V."/>
            <person name="Mobarry C."/>
            <person name="Morris J."/>
            <person name="Moshrefi A."/>
            <person name="Mount S.M."/>
            <person name="Moy M."/>
            <person name="Murphy B."/>
            <person name="Murphy L."/>
            <person name="Muzny D.M."/>
            <person name="Nelson D.L."/>
            <person name="Nelson D.R."/>
            <person name="Nelson K.A."/>
            <person name="Nixon K."/>
            <person name="Nusskern D.R."/>
            <person name="Pacleb J.M."/>
            <person name="Palazzolo M."/>
            <person name="Pittman G.S."/>
            <person name="Pan S."/>
            <person name="Pollard J."/>
            <person name="Puri V."/>
            <person name="Reese M.G."/>
            <person name="Reinert K."/>
            <person name="Remington K."/>
            <person name="Saunders R.D.C."/>
            <person name="Scheeler F."/>
            <person name="Shen H."/>
            <person name="Shue B.C."/>
            <person name="Siden-Kiamos I."/>
            <person name="Simpson M."/>
            <person name="Skupski M.P."/>
            <person name="Smith T.J."/>
            <person name="Spier E."/>
            <person name="Spradling A.C."/>
            <person name="Stapleton M."/>
            <person name="Strong R."/>
            <person name="Sun E."/>
            <person name="Svirskas R."/>
            <person name="Tector C."/>
            <person name="Turner R."/>
            <person name="Venter E."/>
            <person name="Wang A.H."/>
            <person name="Wang X."/>
            <person name="Wang Z.-Y."/>
            <person name="Wassarman D.A."/>
            <person name="Weinstock G.M."/>
            <person name="Weissenbach J."/>
            <person name="Williams S.M."/>
            <person name="Woodage T."/>
            <person name="Worley K.C."/>
            <person name="Wu D."/>
            <person name="Yang S."/>
            <person name="Yao Q.A."/>
            <person name="Ye J."/>
            <person name="Yeh R.-F."/>
            <person name="Zaveri J.S."/>
            <person name="Zhan M."/>
            <person name="Zhang G."/>
            <person name="Zhao Q."/>
            <person name="Zheng L."/>
            <person name="Zheng X.H."/>
            <person name="Zhong F.N."/>
            <person name="Zhong W."/>
            <person name="Zhou X."/>
            <person name="Zhu S.C."/>
            <person name="Zhu X."/>
            <person name="Smith H.O."/>
            <person name="Gibbs R.A."/>
            <person name="Myers E.W."/>
            <person name="Rubin G.M."/>
            <person name="Venter J.C."/>
        </authorList>
    </citation>
    <scope>NUCLEOTIDE SEQUENCE [LARGE SCALE GENOMIC DNA]</scope>
    <source>
        <strain>Berkeley</strain>
    </source>
</reference>
<reference key="2">
    <citation type="journal article" date="2002" name="Genome Biol.">
        <title>Annotation of the Drosophila melanogaster euchromatic genome: a systematic review.</title>
        <authorList>
            <person name="Misra S."/>
            <person name="Crosby M.A."/>
            <person name="Mungall C.J."/>
            <person name="Matthews B.B."/>
            <person name="Campbell K.S."/>
            <person name="Hradecky P."/>
            <person name="Huang Y."/>
            <person name="Kaminker J.S."/>
            <person name="Millburn G.H."/>
            <person name="Prochnik S.E."/>
            <person name="Smith C.D."/>
            <person name="Tupy J.L."/>
            <person name="Whitfield E.J."/>
            <person name="Bayraktaroglu L."/>
            <person name="Berman B.P."/>
            <person name="Bettencourt B.R."/>
            <person name="Celniker S.E."/>
            <person name="de Grey A.D.N.J."/>
            <person name="Drysdale R.A."/>
            <person name="Harris N.L."/>
            <person name="Richter J."/>
            <person name="Russo S."/>
            <person name="Schroeder A.J."/>
            <person name="Shu S.Q."/>
            <person name="Stapleton M."/>
            <person name="Yamada C."/>
            <person name="Ashburner M."/>
            <person name="Gelbart W.M."/>
            <person name="Rubin G.M."/>
            <person name="Lewis S.E."/>
        </authorList>
    </citation>
    <scope>GENOME REANNOTATION</scope>
    <source>
        <strain>Berkeley</strain>
    </source>
</reference>
<reference key="3">
    <citation type="journal article" date="2001" name="Curr. Biol.">
        <title>Spatially restricted expression of candidate taste receptors in the Drosophila gustatory system.</title>
        <authorList>
            <person name="Dunipace L."/>
            <person name="Meister S."/>
            <person name="McNealy C."/>
            <person name="Amrein H."/>
        </authorList>
    </citation>
    <scope>IDENTIFICATION</scope>
</reference>
<reference key="4">
    <citation type="journal article" date="2003" name="Proc. Natl. Acad. Sci. U.S.A.">
        <title>Molecular evolution of the insect chemoreceptor gene superfamily in Drosophila melanogaster.</title>
        <authorList>
            <person name="Robertson H.M."/>
            <person name="Warr C.G."/>
            <person name="Carlson J.R."/>
        </authorList>
    </citation>
    <scope>PREDICTION OF FUNCTION</scope>
</reference>
<reference key="5">
    <citation type="journal article" date="2007" name="Proc. Natl. Acad. Sci. U.S.A.">
        <title>A Drosophila gustatory receptor required for the responses to sucrose, glucose, and maltose identified by mRNA tagging.</title>
        <authorList>
            <person name="Jiao Y."/>
            <person name="Moon S.J."/>
            <person name="Montell C."/>
        </authorList>
    </citation>
    <scope>FUNCTION</scope>
    <scope>TISSUE SPECIFICITY</scope>
</reference>
<reference key="6">
    <citation type="journal article" date="2013" name="Curr. Biol.">
        <title>The molecular basis of sugar sensing in Drosophila larvae.</title>
        <authorList>
            <person name="Mishra D."/>
            <person name="Miyamoto T."/>
            <person name="Rezenom Y.H."/>
            <person name="Broussard A."/>
            <person name="Yavuz A."/>
            <person name="Slone J."/>
            <person name="Russell D.H."/>
            <person name="Amrein H."/>
        </authorList>
    </citation>
    <scope>FUNCTION</scope>
</reference>
<dbReference type="EMBL" id="AE014296">
    <property type="protein sequence ID" value="AAN11577.1"/>
    <property type="molecule type" value="Genomic_DNA"/>
</dbReference>
<dbReference type="RefSeq" id="NP_728921.1">
    <property type="nucleotide sequence ID" value="NM_168049.2"/>
</dbReference>
<dbReference type="SMR" id="P83294"/>
<dbReference type="FunCoup" id="P83294">
    <property type="interactions" value="4"/>
</dbReference>
<dbReference type="STRING" id="7227.FBpp0073051"/>
<dbReference type="GlyCosmos" id="P83294">
    <property type="glycosylation" value="1 site, No reported glycans"/>
</dbReference>
<dbReference type="GlyGen" id="P83294">
    <property type="glycosylation" value="1 site"/>
</dbReference>
<dbReference type="PaxDb" id="7227-FBpp0073051"/>
<dbReference type="EnsemblMetazoa" id="FBtr0073195">
    <property type="protein sequence ID" value="FBpp0073051"/>
    <property type="gene ID" value="FBgn0045478"/>
</dbReference>
<dbReference type="GeneID" id="117480"/>
<dbReference type="KEGG" id="dme:Dmel_CG32257"/>
<dbReference type="AGR" id="FB:FBgn0045478"/>
<dbReference type="CTD" id="117480"/>
<dbReference type="FlyBase" id="FBgn0045478">
    <property type="gene designation" value="Gr64b"/>
</dbReference>
<dbReference type="VEuPathDB" id="VectorBase:FBgn0045478"/>
<dbReference type="eggNOG" id="ENOG502SWP3">
    <property type="taxonomic scope" value="Eukaryota"/>
</dbReference>
<dbReference type="GeneTree" id="ENSGT00530000064347"/>
<dbReference type="HOGENOM" id="CLU_043581_1_0_1"/>
<dbReference type="InParanoid" id="P83294"/>
<dbReference type="OMA" id="WYSLIFA"/>
<dbReference type="OrthoDB" id="5800391at2759"/>
<dbReference type="PhylomeDB" id="P83294"/>
<dbReference type="BioGRID-ORCS" id="117480">
    <property type="hits" value="0 hits in 1 CRISPR screen"/>
</dbReference>
<dbReference type="GenomeRNAi" id="117480"/>
<dbReference type="PRO" id="PR:P83294"/>
<dbReference type="Proteomes" id="UP000000803">
    <property type="component" value="Chromosome 3L"/>
</dbReference>
<dbReference type="GO" id="GO:0016020">
    <property type="term" value="C:membrane"/>
    <property type="evidence" value="ECO:0000303"/>
    <property type="project" value="UniProtKB"/>
</dbReference>
<dbReference type="GO" id="GO:0005886">
    <property type="term" value="C:plasma membrane"/>
    <property type="evidence" value="ECO:0000250"/>
    <property type="project" value="FlyBase"/>
</dbReference>
<dbReference type="GO" id="GO:0170023">
    <property type="term" value="F:ionotropic sweet taste receptor activity"/>
    <property type="evidence" value="ECO:0000315"/>
    <property type="project" value="FlyBase"/>
</dbReference>
<dbReference type="GO" id="GO:0015276">
    <property type="term" value="F:ligand-gated monoatomic ion channel activity"/>
    <property type="evidence" value="ECO:0000250"/>
    <property type="project" value="FlyBase"/>
</dbReference>
<dbReference type="GO" id="GO:0033041">
    <property type="term" value="F:sweet taste receptor activity"/>
    <property type="evidence" value="ECO:0000318"/>
    <property type="project" value="GO_Central"/>
</dbReference>
<dbReference type="GO" id="GO:0008527">
    <property type="term" value="F:taste receptor activity"/>
    <property type="evidence" value="ECO:0000303"/>
    <property type="project" value="UniProtKB"/>
</dbReference>
<dbReference type="GO" id="GO:0034220">
    <property type="term" value="P:monoatomic ion transmembrane transport"/>
    <property type="evidence" value="ECO:0000250"/>
    <property type="project" value="FlyBase"/>
</dbReference>
<dbReference type="GO" id="GO:0050916">
    <property type="term" value="P:sensory perception of sweet taste"/>
    <property type="evidence" value="ECO:0000315"/>
    <property type="project" value="FlyBase"/>
</dbReference>
<dbReference type="GO" id="GO:0050909">
    <property type="term" value="P:sensory perception of taste"/>
    <property type="evidence" value="ECO:0000303"/>
    <property type="project" value="UniProtKB"/>
</dbReference>
<dbReference type="GO" id="GO:0007165">
    <property type="term" value="P:signal transduction"/>
    <property type="evidence" value="ECO:0007669"/>
    <property type="project" value="UniProtKB-KW"/>
</dbReference>
<dbReference type="InterPro" id="IPR009318">
    <property type="entry name" value="Gustatory_rcpt"/>
</dbReference>
<dbReference type="PANTHER" id="PTHR21421">
    <property type="entry name" value="GUSTATORY RECEPTOR"/>
    <property type="match status" value="1"/>
</dbReference>
<dbReference type="PANTHER" id="PTHR21421:SF35">
    <property type="entry name" value="GUSTATORY RECEPTOR FOR SUGAR TASTE 64B-RELATED"/>
    <property type="match status" value="1"/>
</dbReference>
<dbReference type="Pfam" id="PF06151">
    <property type="entry name" value="Trehalose_recp"/>
    <property type="match status" value="1"/>
</dbReference>
<dbReference type="PIRSF" id="PIRSF038981">
    <property type="entry name" value="GRP"/>
    <property type="match status" value="1"/>
</dbReference>
<protein>
    <recommendedName>
        <fullName>Gustatory receptor for sugar taste 64b</fullName>
    </recommendedName>
</protein>
<feature type="chain" id="PRO_0000216529" description="Gustatory receptor for sugar taste 64b">
    <location>
        <begin position="1"/>
        <end position="406"/>
    </location>
</feature>
<feature type="topological domain" description="Cytoplasmic" evidence="1">
    <location>
        <begin position="1"/>
        <end position="47"/>
    </location>
</feature>
<feature type="transmembrane region" description="Helical; Name=1" evidence="2">
    <location>
        <begin position="48"/>
        <end position="68"/>
    </location>
</feature>
<feature type="topological domain" description="Extracellular" evidence="1">
    <location>
        <begin position="69"/>
        <end position="79"/>
    </location>
</feature>
<feature type="transmembrane region" description="Helical; Name=2" evidence="2">
    <location>
        <begin position="80"/>
        <end position="100"/>
    </location>
</feature>
<feature type="topological domain" description="Cytoplasmic" evidence="1">
    <location>
        <begin position="101"/>
        <end position="130"/>
    </location>
</feature>
<feature type="transmembrane region" description="Helical; Name=3" evidence="2">
    <location>
        <begin position="131"/>
        <end position="151"/>
    </location>
</feature>
<feature type="topological domain" description="Extracellular" evidence="1">
    <location>
        <begin position="152"/>
        <end position="183"/>
    </location>
</feature>
<feature type="transmembrane region" description="Helical; Name=4" evidence="2">
    <location>
        <begin position="184"/>
        <end position="204"/>
    </location>
</feature>
<feature type="topological domain" description="Cytoplasmic" evidence="1">
    <location>
        <begin position="205"/>
        <end position="265"/>
    </location>
</feature>
<feature type="transmembrane region" description="Helical; Name=5" evidence="2">
    <location>
        <begin position="266"/>
        <end position="286"/>
    </location>
</feature>
<feature type="topological domain" description="Extracellular" evidence="1">
    <location>
        <begin position="287"/>
        <end position="290"/>
    </location>
</feature>
<feature type="transmembrane region" description="Helical; Name=6" evidence="2">
    <location>
        <begin position="291"/>
        <end position="311"/>
    </location>
</feature>
<feature type="topological domain" description="Cytoplasmic" evidence="1">
    <location>
        <begin position="312"/>
        <end position="370"/>
    </location>
</feature>
<feature type="transmembrane region" description="Helical; Name=7" evidence="2">
    <location>
        <begin position="371"/>
        <end position="391"/>
    </location>
</feature>
<feature type="topological domain" description="Extracellular" evidence="1">
    <location>
        <begin position="392"/>
        <end position="406"/>
    </location>
</feature>
<feature type="glycosylation site" description="N-linked (GlcNAc...) asparagine" evidence="2">
    <location>
        <position position="167"/>
    </location>
</feature>